<sequence>MTVRLILAKGREKSLLRRHPWIFSGAVQRLEGDALSGETIDILDSQGKWLARAAYSPESQILARVWTFQQDEVIDCAFFIRRLQQAQNWRDWLAQRDGLNGYRLIAGESDGLPGITIDRFQNFLVLQLLSAGAEYQRETLVSALQHCYPECSIYDRSDVSVRKKEGLPLTQGLICGEMPPALLPISENGMQLFVDIQQGHKTGFYLDQRDSRLAARNYANGRRVLNCFSYTGAFAVAALMGNCQQVISVDTSQSVLDIAKQNIELNQLDLSKTEFVRDDVFQLLRSYRAQGEKFDLIIMDPPKFVENKSQLASACRGYKDINMLAIQLLRPGGILLSFSCSGLMPVDLFQKILADAALDAGHDIQFIEQFRQAADHPVIAAYPEGLYLKGFACRVM</sequence>
<reference key="1">
    <citation type="submission" date="2008-02" db="EMBL/GenBank/DDBJ databases">
        <title>Complete sequence of Yersinia pseudotuberculosis YPIII.</title>
        <authorList>
            <consortium name="US DOE Joint Genome Institute"/>
            <person name="Copeland A."/>
            <person name="Lucas S."/>
            <person name="Lapidus A."/>
            <person name="Glavina del Rio T."/>
            <person name="Dalin E."/>
            <person name="Tice H."/>
            <person name="Bruce D."/>
            <person name="Goodwin L."/>
            <person name="Pitluck S."/>
            <person name="Munk A.C."/>
            <person name="Brettin T."/>
            <person name="Detter J.C."/>
            <person name="Han C."/>
            <person name="Tapia R."/>
            <person name="Schmutz J."/>
            <person name="Larimer F."/>
            <person name="Land M."/>
            <person name="Hauser L."/>
            <person name="Challacombe J.F."/>
            <person name="Green L."/>
            <person name="Lindler L.E."/>
            <person name="Nikolich M.P."/>
            <person name="Richardson P."/>
        </authorList>
    </citation>
    <scope>NUCLEOTIDE SEQUENCE [LARGE SCALE GENOMIC DNA]</scope>
    <source>
        <strain>YPIII</strain>
    </source>
</reference>
<name>RLMI_YERPY</name>
<dbReference type="EC" id="2.1.1.191" evidence="1"/>
<dbReference type="EMBL" id="CP000950">
    <property type="protein sequence ID" value="ACA68897.1"/>
    <property type="molecule type" value="Genomic_DNA"/>
</dbReference>
<dbReference type="RefSeq" id="WP_002213052.1">
    <property type="nucleotide sequence ID" value="NZ_CP009792.1"/>
</dbReference>
<dbReference type="SMR" id="B1JQP6"/>
<dbReference type="GeneID" id="57977118"/>
<dbReference type="KEGG" id="ypy:YPK_2620"/>
<dbReference type="PATRIC" id="fig|502800.11.peg.3319"/>
<dbReference type="GO" id="GO:0005737">
    <property type="term" value="C:cytoplasm"/>
    <property type="evidence" value="ECO:0007669"/>
    <property type="project" value="UniProtKB-SubCell"/>
</dbReference>
<dbReference type="GO" id="GO:0003723">
    <property type="term" value="F:RNA binding"/>
    <property type="evidence" value="ECO:0007669"/>
    <property type="project" value="UniProtKB-KW"/>
</dbReference>
<dbReference type="GO" id="GO:0016434">
    <property type="term" value="F:rRNA (cytosine) methyltransferase activity"/>
    <property type="evidence" value="ECO:0007669"/>
    <property type="project" value="UniProtKB-UniRule"/>
</dbReference>
<dbReference type="CDD" id="cd02440">
    <property type="entry name" value="AdoMet_MTases"/>
    <property type="match status" value="1"/>
</dbReference>
<dbReference type="CDD" id="cd21153">
    <property type="entry name" value="PUA_RlmI"/>
    <property type="match status" value="1"/>
</dbReference>
<dbReference type="CDD" id="cd11572">
    <property type="entry name" value="RlmI_M_like"/>
    <property type="match status" value="1"/>
</dbReference>
<dbReference type="Gene3D" id="2.30.130.10">
    <property type="entry name" value="PUA domain"/>
    <property type="match status" value="1"/>
</dbReference>
<dbReference type="Gene3D" id="3.30.750.80">
    <property type="entry name" value="RNA methyltransferase domain (HRMD) like"/>
    <property type="match status" value="1"/>
</dbReference>
<dbReference type="Gene3D" id="3.40.50.150">
    <property type="entry name" value="Vaccinia Virus protein VP39"/>
    <property type="match status" value="1"/>
</dbReference>
<dbReference type="HAMAP" id="MF_01857">
    <property type="entry name" value="23SrRNA_methyltr_I"/>
    <property type="match status" value="1"/>
</dbReference>
<dbReference type="InterPro" id="IPR002478">
    <property type="entry name" value="PUA"/>
</dbReference>
<dbReference type="InterPro" id="IPR015947">
    <property type="entry name" value="PUA-like_sf"/>
</dbReference>
<dbReference type="InterPro" id="IPR036974">
    <property type="entry name" value="PUA_sf"/>
</dbReference>
<dbReference type="InterPro" id="IPR023542">
    <property type="entry name" value="RLMI"/>
</dbReference>
<dbReference type="InterPro" id="IPR041532">
    <property type="entry name" value="RlmI-like_PUA"/>
</dbReference>
<dbReference type="InterPro" id="IPR019614">
    <property type="entry name" value="SAM-dep_methyl-trfase"/>
</dbReference>
<dbReference type="InterPro" id="IPR029063">
    <property type="entry name" value="SAM-dependent_MTases_sf"/>
</dbReference>
<dbReference type="NCBIfam" id="NF011707">
    <property type="entry name" value="PRK15128.1"/>
    <property type="match status" value="1"/>
</dbReference>
<dbReference type="PANTHER" id="PTHR42873">
    <property type="entry name" value="RIBOSOMAL RNA LARGE SUBUNIT METHYLTRANSFERASE"/>
    <property type="match status" value="1"/>
</dbReference>
<dbReference type="PANTHER" id="PTHR42873:SF1">
    <property type="entry name" value="S-ADENOSYLMETHIONINE-DEPENDENT METHYLTRANSFERASE DOMAIN-CONTAINING PROTEIN"/>
    <property type="match status" value="1"/>
</dbReference>
<dbReference type="Pfam" id="PF10672">
    <property type="entry name" value="Methyltrans_SAM"/>
    <property type="match status" value="1"/>
</dbReference>
<dbReference type="Pfam" id="PF17785">
    <property type="entry name" value="PUA_3"/>
    <property type="match status" value="1"/>
</dbReference>
<dbReference type="SMART" id="SM00359">
    <property type="entry name" value="PUA"/>
    <property type="match status" value="1"/>
</dbReference>
<dbReference type="SUPFAM" id="SSF88697">
    <property type="entry name" value="PUA domain-like"/>
    <property type="match status" value="1"/>
</dbReference>
<dbReference type="SUPFAM" id="SSF53335">
    <property type="entry name" value="S-adenosyl-L-methionine-dependent methyltransferases"/>
    <property type="match status" value="1"/>
</dbReference>
<dbReference type="PROSITE" id="PS50890">
    <property type="entry name" value="PUA"/>
    <property type="match status" value="1"/>
</dbReference>
<proteinExistence type="inferred from homology"/>
<comment type="function">
    <text evidence="1">Specifically methylates the cytosine at position 1962 (m5C1962) of 23S rRNA.</text>
</comment>
<comment type="catalytic activity">
    <reaction evidence="1">
        <text>cytidine(1962) in 23S rRNA + S-adenosyl-L-methionine = 5-methylcytidine(1962) in 23S rRNA + S-adenosyl-L-homocysteine + H(+)</text>
        <dbReference type="Rhea" id="RHEA:42912"/>
        <dbReference type="Rhea" id="RHEA-COMP:10382"/>
        <dbReference type="Rhea" id="RHEA-COMP:10386"/>
        <dbReference type="ChEBI" id="CHEBI:15378"/>
        <dbReference type="ChEBI" id="CHEBI:57856"/>
        <dbReference type="ChEBI" id="CHEBI:59789"/>
        <dbReference type="ChEBI" id="CHEBI:74483"/>
        <dbReference type="ChEBI" id="CHEBI:82748"/>
        <dbReference type="EC" id="2.1.1.191"/>
    </reaction>
</comment>
<comment type="subcellular location">
    <subcellularLocation>
        <location evidence="1">Cytoplasm</location>
    </subcellularLocation>
</comment>
<comment type="similarity">
    <text evidence="1">Belongs to the methyltransferase superfamily. RlmI family.</text>
</comment>
<evidence type="ECO:0000255" key="1">
    <source>
        <dbReference type="HAMAP-Rule" id="MF_01857"/>
    </source>
</evidence>
<protein>
    <recommendedName>
        <fullName evidence="1">Ribosomal RNA large subunit methyltransferase I</fullName>
        <ecNumber evidence="1">2.1.1.191</ecNumber>
    </recommendedName>
    <alternativeName>
        <fullName evidence="1">23S rRNA m5C1962 methyltransferase</fullName>
    </alternativeName>
    <alternativeName>
        <fullName evidence="1">rRNA (cytosine-C(5)-)-methyltransferase RlmI</fullName>
    </alternativeName>
</protein>
<organism>
    <name type="scientific">Yersinia pseudotuberculosis serotype O:3 (strain YPIII)</name>
    <dbReference type="NCBI Taxonomy" id="502800"/>
    <lineage>
        <taxon>Bacteria</taxon>
        <taxon>Pseudomonadati</taxon>
        <taxon>Pseudomonadota</taxon>
        <taxon>Gammaproteobacteria</taxon>
        <taxon>Enterobacterales</taxon>
        <taxon>Yersiniaceae</taxon>
        <taxon>Yersinia</taxon>
    </lineage>
</organism>
<keyword id="KW-0963">Cytoplasm</keyword>
<keyword id="KW-0489">Methyltransferase</keyword>
<keyword id="KW-0694">RNA-binding</keyword>
<keyword id="KW-0698">rRNA processing</keyword>
<keyword id="KW-0949">S-adenosyl-L-methionine</keyword>
<keyword id="KW-0808">Transferase</keyword>
<feature type="chain" id="PRO_0000366288" description="Ribosomal RNA large subunit methyltransferase I">
    <location>
        <begin position="1"/>
        <end position="396"/>
    </location>
</feature>
<feature type="domain" description="PUA" evidence="1">
    <location>
        <begin position="2"/>
        <end position="81"/>
    </location>
</feature>
<accession>B1JQP6</accession>
<gene>
    <name evidence="1" type="primary">rlmI</name>
    <name type="ordered locus">YPK_2620</name>
</gene>